<evidence type="ECO:0000255" key="1">
    <source>
        <dbReference type="HAMAP-Rule" id="MF_00815"/>
    </source>
</evidence>
<reference key="1">
    <citation type="journal article" date="1985" name="Biochem. J.">
        <title>Nucleotide sequence of the Rhodospirillum rubrum atp operon.</title>
        <authorList>
            <person name="Falk G."/>
            <person name="Hampe A."/>
            <person name="Walker J.E."/>
        </authorList>
    </citation>
    <scope>NUCLEOTIDE SEQUENCE [GENOMIC DNA]</scope>
</reference>
<sequence>MASLKDLRSRITSVKSTQKITSAMKMVAASRLRRAQDTAEAARPYTQRMERMLGNLAASTAGMAGASPLLGGTGKDNVHLIVALTANRGLCGGFNGSIIRATRTLVRELEAQGKTVKLLCIGKKGRDGLKREFPKQIIGGIADQSSKAIGFSDADRFSRLILDMFQAGEFDVCTLVYNRFQSAISQVVTRQQIIPFAVPTTVAAGNDNDRTAGPKAIYEYEPSEEEILADLLPKNVAIQVFRGMLESFASEQGARMTAMDNATRNAGDMIKKLSLTYNRTRQAQITKELIEIISGAEAI</sequence>
<name>ATPG_RHORU</name>
<gene>
    <name evidence="1" type="primary">atpG</name>
</gene>
<protein>
    <recommendedName>
        <fullName evidence="1">ATP synthase gamma chain</fullName>
    </recommendedName>
    <alternativeName>
        <fullName evidence="1">ATP synthase F1 sector gamma subunit</fullName>
    </alternativeName>
    <alternativeName>
        <fullName evidence="1">F-ATPase gamma subunit</fullName>
    </alternativeName>
</protein>
<comment type="function">
    <text evidence="1">Produces ATP from ADP in the presence of a proton gradient across the membrane. The gamma chain is believed to be important in regulating ATPase activity and the flow of protons through the CF(0) complex.</text>
</comment>
<comment type="subunit">
    <text evidence="1">F-type ATPases have 2 components, CF(1) - the catalytic core - and CF(0) - the membrane proton channel. CF(1) has five subunits: alpha(3), beta(3), gamma(1), delta(1), epsilon(1). CF(0) has three main subunits: a, b and c.</text>
</comment>
<comment type="subcellular location">
    <subcellularLocation>
        <location evidence="1">Cell inner membrane</location>
        <topology evidence="1">Peripheral membrane protein</topology>
    </subcellularLocation>
</comment>
<comment type="similarity">
    <text evidence="1">Belongs to the ATPase gamma chain family.</text>
</comment>
<proteinExistence type="inferred from homology"/>
<organism>
    <name type="scientific">Rhodospirillum rubrum</name>
    <dbReference type="NCBI Taxonomy" id="1085"/>
    <lineage>
        <taxon>Bacteria</taxon>
        <taxon>Pseudomonadati</taxon>
        <taxon>Pseudomonadota</taxon>
        <taxon>Alphaproteobacteria</taxon>
        <taxon>Rhodospirillales</taxon>
        <taxon>Rhodospirillaceae</taxon>
        <taxon>Rhodospirillum</taxon>
    </lineage>
</organism>
<accession>P07227</accession>
<keyword id="KW-0066">ATP synthesis</keyword>
<keyword id="KW-0997">Cell inner membrane</keyword>
<keyword id="KW-1003">Cell membrane</keyword>
<keyword id="KW-0139">CF(1)</keyword>
<keyword id="KW-0375">Hydrogen ion transport</keyword>
<keyword id="KW-0406">Ion transport</keyword>
<keyword id="KW-0472">Membrane</keyword>
<keyword id="KW-0813">Transport</keyword>
<dbReference type="EMBL" id="X02499">
    <property type="protein sequence ID" value="CAA26339.1"/>
    <property type="molecule type" value="Genomic_DNA"/>
</dbReference>
<dbReference type="PIR" id="S08582">
    <property type="entry name" value="PWQFG"/>
</dbReference>
<dbReference type="RefSeq" id="WP_011388980.1">
    <property type="nucleotide sequence ID" value="NZ_DAMDTZ010000168.1"/>
</dbReference>
<dbReference type="SMR" id="P07227"/>
<dbReference type="OMA" id="MQITSAM"/>
<dbReference type="GO" id="GO:0005886">
    <property type="term" value="C:plasma membrane"/>
    <property type="evidence" value="ECO:0007669"/>
    <property type="project" value="UniProtKB-SubCell"/>
</dbReference>
<dbReference type="GO" id="GO:0045259">
    <property type="term" value="C:proton-transporting ATP synthase complex"/>
    <property type="evidence" value="ECO:0007669"/>
    <property type="project" value="UniProtKB-KW"/>
</dbReference>
<dbReference type="GO" id="GO:0005524">
    <property type="term" value="F:ATP binding"/>
    <property type="evidence" value="ECO:0007669"/>
    <property type="project" value="UniProtKB-UniRule"/>
</dbReference>
<dbReference type="GO" id="GO:0046933">
    <property type="term" value="F:proton-transporting ATP synthase activity, rotational mechanism"/>
    <property type="evidence" value="ECO:0007669"/>
    <property type="project" value="UniProtKB-UniRule"/>
</dbReference>
<dbReference type="GO" id="GO:0042777">
    <property type="term" value="P:proton motive force-driven plasma membrane ATP synthesis"/>
    <property type="evidence" value="ECO:0007669"/>
    <property type="project" value="UniProtKB-UniRule"/>
</dbReference>
<dbReference type="CDD" id="cd12151">
    <property type="entry name" value="F1-ATPase_gamma"/>
    <property type="match status" value="1"/>
</dbReference>
<dbReference type="FunFam" id="1.10.287.80:FF:000001">
    <property type="entry name" value="ATP synthase gamma chain"/>
    <property type="match status" value="1"/>
</dbReference>
<dbReference type="Gene3D" id="3.40.1380.10">
    <property type="match status" value="1"/>
</dbReference>
<dbReference type="Gene3D" id="1.10.287.80">
    <property type="entry name" value="ATP synthase, gamma subunit, helix hairpin domain"/>
    <property type="match status" value="2"/>
</dbReference>
<dbReference type="HAMAP" id="MF_00815">
    <property type="entry name" value="ATP_synth_gamma_bact"/>
    <property type="match status" value="1"/>
</dbReference>
<dbReference type="InterPro" id="IPR035968">
    <property type="entry name" value="ATP_synth_F1_ATPase_gsu"/>
</dbReference>
<dbReference type="InterPro" id="IPR000131">
    <property type="entry name" value="ATP_synth_F1_gsu"/>
</dbReference>
<dbReference type="InterPro" id="IPR023632">
    <property type="entry name" value="ATP_synth_F1_gsu_CS"/>
</dbReference>
<dbReference type="NCBIfam" id="TIGR01146">
    <property type="entry name" value="ATPsyn_F1gamma"/>
    <property type="match status" value="1"/>
</dbReference>
<dbReference type="NCBIfam" id="NF004146">
    <property type="entry name" value="PRK05621.1-4"/>
    <property type="match status" value="1"/>
</dbReference>
<dbReference type="PANTHER" id="PTHR11693">
    <property type="entry name" value="ATP SYNTHASE GAMMA CHAIN"/>
    <property type="match status" value="1"/>
</dbReference>
<dbReference type="PANTHER" id="PTHR11693:SF22">
    <property type="entry name" value="ATP SYNTHASE SUBUNIT GAMMA, MITOCHONDRIAL"/>
    <property type="match status" value="1"/>
</dbReference>
<dbReference type="Pfam" id="PF00231">
    <property type="entry name" value="ATP-synt"/>
    <property type="match status" value="1"/>
</dbReference>
<dbReference type="PIRSF" id="PIRSF039089">
    <property type="entry name" value="ATP_synthase_gamma"/>
    <property type="match status" value="1"/>
</dbReference>
<dbReference type="PRINTS" id="PR00126">
    <property type="entry name" value="ATPASEGAMMA"/>
</dbReference>
<dbReference type="SUPFAM" id="SSF52943">
    <property type="entry name" value="ATP synthase (F1-ATPase), gamma subunit"/>
    <property type="match status" value="1"/>
</dbReference>
<dbReference type="PROSITE" id="PS00153">
    <property type="entry name" value="ATPASE_GAMMA"/>
    <property type="match status" value="1"/>
</dbReference>
<feature type="chain" id="PRO_0000073360" description="ATP synthase gamma chain">
    <location>
        <begin position="1"/>
        <end position="299"/>
    </location>
</feature>